<reference key="1">
    <citation type="submission" date="2008-05" db="EMBL/GenBank/DDBJ databases">
        <title>Complete sequence of Shigella boydii serotype 18 strain BS512.</title>
        <authorList>
            <person name="Rasko D.A."/>
            <person name="Rosovitz M."/>
            <person name="Maurelli A.T."/>
            <person name="Myers G."/>
            <person name="Seshadri R."/>
            <person name="Cer R."/>
            <person name="Jiang L."/>
            <person name="Ravel J."/>
            <person name="Sebastian Y."/>
        </authorList>
    </citation>
    <scope>NUCLEOTIDE SEQUENCE [LARGE SCALE GENOMIC DNA]</scope>
    <source>
        <strain>CDC 3083-94 / BS512</strain>
    </source>
</reference>
<name>GCSP_SHIB3</name>
<evidence type="ECO:0000255" key="1">
    <source>
        <dbReference type="HAMAP-Rule" id="MF_00711"/>
    </source>
</evidence>
<comment type="function">
    <text evidence="1">The glycine cleavage system catalyzes the degradation of glycine. The P protein binds the alpha-amino group of glycine through its pyridoxal phosphate cofactor; CO(2) is released and the remaining methylamine moiety is then transferred to the lipoamide cofactor of the H protein.</text>
</comment>
<comment type="catalytic activity">
    <reaction evidence="1">
        <text>N(6)-[(R)-lipoyl]-L-lysyl-[glycine-cleavage complex H protein] + glycine + H(+) = N(6)-[(R)-S(8)-aminomethyldihydrolipoyl]-L-lysyl-[glycine-cleavage complex H protein] + CO2</text>
        <dbReference type="Rhea" id="RHEA:24304"/>
        <dbReference type="Rhea" id="RHEA-COMP:10494"/>
        <dbReference type="Rhea" id="RHEA-COMP:10495"/>
        <dbReference type="ChEBI" id="CHEBI:15378"/>
        <dbReference type="ChEBI" id="CHEBI:16526"/>
        <dbReference type="ChEBI" id="CHEBI:57305"/>
        <dbReference type="ChEBI" id="CHEBI:83099"/>
        <dbReference type="ChEBI" id="CHEBI:83143"/>
        <dbReference type="EC" id="1.4.4.2"/>
    </reaction>
</comment>
<comment type="cofactor">
    <cofactor evidence="1">
        <name>pyridoxal 5'-phosphate</name>
        <dbReference type="ChEBI" id="CHEBI:597326"/>
    </cofactor>
</comment>
<comment type="subunit">
    <text evidence="1">The glycine cleavage system is composed of four proteins: P, T, L and H.</text>
</comment>
<comment type="similarity">
    <text evidence="1">Belongs to the GcvP family.</text>
</comment>
<gene>
    <name evidence="1" type="primary">gcvP</name>
    <name type="ordered locus">SbBS512_E3324</name>
</gene>
<sequence>MTQTLSQLENSGAFIERHIGPDAAQQQEMLNAVGAQSLNALTGQIVPKDIQLATPPQVGAPATEYAALAELKAIASRNKRFTSYIGMGYTAVQLPPVILRNMLENPGWYTAYTPYQPEVSQGRLEALLNFQQVTLDLTGLDMASASLLDEATAAAEAMAMAKRVSKLKNSNRFFVASDVHPQTLDVVRTRAETFGFEVIVDDAQKVLDHQDVFGVLLQQVGTTGEIHDYTALISELKSRKIVVSVAADIMALVLLTAPGKQGADIVFGSAQRFGVPMGYGGPHAAFFAAKDEYKRSMPGRIIGVSKDAAGNTALRMAMQTREQHIRREKANSNICTSQVLLANIASLYAVYHGPVGLKRIANRIHRLTDILAAGLQQKGLKLRHAHYFDTLCVEVADKAGVLARAEAAEINLRSDILNAVGITLDETTTRENVMQLFSVLLGDNHGLEIDTLDKDVAHDSRSIQPAMLRDDEILTHPVFNRYHSETEMMRYMHSLERKDLALNQAMIPLGSCTMKLNSAAEMIPITWPEFAELHPFCPPEQAEGYQQMIAQLADWLVKLTGYDAVCMQPNSGAQGEYAGLLAIRHYHESRNEGHRDICLIPASAHGTNPASAHMAGMQVVVVACDKNGNIDLTDLRAKAEQAGDNLSCIMVTYPSTHGVYEETIREVCEVVHQFGGQVYLDGANMNAQVGITSPGFIGADVSHLNLHKTFCIPHGGGGPGMGPIGVKAHLAPFVPGHSVVQIEGMLTRQGAVSAAPFGSASILPISWMYIRMMGAEGLKKASQVAILNANYIASRLQDAFPVLYTGRDGRVAHECILDIRPLKEETSISELDIAKRLIDYGFHAPTMSFPVAGTLMVEPTESESKVELDRFIDAMLAIRAEIDQVKAGVWPLEDNPLVNAPHIQSELVAEWAHPYSREVAVFPAGVADKYWPTVKRLDDVYGDRNLFCSCVPISEYQ</sequence>
<feature type="chain" id="PRO_1000132457" description="Glycine dehydrogenase (decarboxylating)">
    <location>
        <begin position="1"/>
        <end position="957"/>
    </location>
</feature>
<feature type="modified residue" description="N6-(pyridoxal phosphate)lysine" evidence="1">
    <location>
        <position position="708"/>
    </location>
</feature>
<proteinExistence type="inferred from homology"/>
<protein>
    <recommendedName>
        <fullName evidence="1">Glycine dehydrogenase (decarboxylating)</fullName>
        <ecNumber evidence="1">1.4.4.2</ecNumber>
    </recommendedName>
    <alternativeName>
        <fullName evidence="1">Glycine cleavage system P-protein</fullName>
    </alternativeName>
    <alternativeName>
        <fullName evidence="1">Glycine decarboxylase</fullName>
    </alternativeName>
    <alternativeName>
        <fullName evidence="1">Glycine dehydrogenase (aminomethyl-transferring)</fullName>
    </alternativeName>
</protein>
<organism>
    <name type="scientific">Shigella boydii serotype 18 (strain CDC 3083-94 / BS512)</name>
    <dbReference type="NCBI Taxonomy" id="344609"/>
    <lineage>
        <taxon>Bacteria</taxon>
        <taxon>Pseudomonadati</taxon>
        <taxon>Pseudomonadota</taxon>
        <taxon>Gammaproteobacteria</taxon>
        <taxon>Enterobacterales</taxon>
        <taxon>Enterobacteriaceae</taxon>
        <taxon>Shigella</taxon>
    </lineage>
</organism>
<dbReference type="EC" id="1.4.4.2" evidence="1"/>
<dbReference type="EMBL" id="CP001063">
    <property type="protein sequence ID" value="ACD07093.1"/>
    <property type="molecule type" value="Genomic_DNA"/>
</dbReference>
<dbReference type="RefSeq" id="WP_000195083.1">
    <property type="nucleotide sequence ID" value="NC_010658.1"/>
</dbReference>
<dbReference type="SMR" id="B2U0S0"/>
<dbReference type="STRING" id="344609.SbBS512_E3324"/>
<dbReference type="KEGG" id="sbc:SbBS512_E3324"/>
<dbReference type="HOGENOM" id="CLU_004620_1_1_6"/>
<dbReference type="Proteomes" id="UP000001030">
    <property type="component" value="Chromosome"/>
</dbReference>
<dbReference type="GO" id="GO:0005829">
    <property type="term" value="C:cytosol"/>
    <property type="evidence" value="ECO:0007669"/>
    <property type="project" value="TreeGrafter"/>
</dbReference>
<dbReference type="GO" id="GO:0005960">
    <property type="term" value="C:glycine cleavage complex"/>
    <property type="evidence" value="ECO:0007669"/>
    <property type="project" value="TreeGrafter"/>
</dbReference>
<dbReference type="GO" id="GO:0016594">
    <property type="term" value="F:glycine binding"/>
    <property type="evidence" value="ECO:0007669"/>
    <property type="project" value="TreeGrafter"/>
</dbReference>
<dbReference type="GO" id="GO:0004375">
    <property type="term" value="F:glycine dehydrogenase (decarboxylating) activity"/>
    <property type="evidence" value="ECO:0007669"/>
    <property type="project" value="UniProtKB-EC"/>
</dbReference>
<dbReference type="GO" id="GO:0030170">
    <property type="term" value="F:pyridoxal phosphate binding"/>
    <property type="evidence" value="ECO:0007669"/>
    <property type="project" value="TreeGrafter"/>
</dbReference>
<dbReference type="GO" id="GO:0019464">
    <property type="term" value="P:glycine decarboxylation via glycine cleavage system"/>
    <property type="evidence" value="ECO:0007669"/>
    <property type="project" value="UniProtKB-UniRule"/>
</dbReference>
<dbReference type="CDD" id="cd00613">
    <property type="entry name" value="GDC-P"/>
    <property type="match status" value="2"/>
</dbReference>
<dbReference type="FunFam" id="3.40.640.10:FF:000005">
    <property type="entry name" value="Glycine dehydrogenase (decarboxylating), mitochondrial"/>
    <property type="match status" value="1"/>
</dbReference>
<dbReference type="FunFam" id="3.90.1150.10:FF:000007">
    <property type="entry name" value="Glycine dehydrogenase (decarboxylating), mitochondrial"/>
    <property type="match status" value="1"/>
</dbReference>
<dbReference type="FunFam" id="3.40.640.10:FF:000007">
    <property type="entry name" value="glycine dehydrogenase (Decarboxylating), mitochondrial"/>
    <property type="match status" value="1"/>
</dbReference>
<dbReference type="Gene3D" id="3.90.1150.10">
    <property type="entry name" value="Aspartate Aminotransferase, domain 1"/>
    <property type="match status" value="1"/>
</dbReference>
<dbReference type="Gene3D" id="3.40.640.10">
    <property type="entry name" value="Type I PLP-dependent aspartate aminotransferase-like (Major domain)"/>
    <property type="match status" value="2"/>
</dbReference>
<dbReference type="HAMAP" id="MF_00711">
    <property type="entry name" value="GcvP"/>
    <property type="match status" value="1"/>
</dbReference>
<dbReference type="InterPro" id="IPR003437">
    <property type="entry name" value="GcvP"/>
</dbReference>
<dbReference type="InterPro" id="IPR049316">
    <property type="entry name" value="GDC-P_C"/>
</dbReference>
<dbReference type="InterPro" id="IPR049315">
    <property type="entry name" value="GDC-P_N"/>
</dbReference>
<dbReference type="InterPro" id="IPR020581">
    <property type="entry name" value="GDC_P"/>
</dbReference>
<dbReference type="InterPro" id="IPR015424">
    <property type="entry name" value="PyrdxlP-dep_Trfase"/>
</dbReference>
<dbReference type="InterPro" id="IPR015421">
    <property type="entry name" value="PyrdxlP-dep_Trfase_major"/>
</dbReference>
<dbReference type="InterPro" id="IPR015422">
    <property type="entry name" value="PyrdxlP-dep_Trfase_small"/>
</dbReference>
<dbReference type="NCBIfam" id="TIGR00461">
    <property type="entry name" value="gcvP"/>
    <property type="match status" value="1"/>
</dbReference>
<dbReference type="NCBIfam" id="NF003346">
    <property type="entry name" value="PRK04366.1"/>
    <property type="match status" value="1"/>
</dbReference>
<dbReference type="PANTHER" id="PTHR11773:SF13">
    <property type="entry name" value="GLYCINE DEHYDROGENASE (DECARBOXYLATING)"/>
    <property type="match status" value="1"/>
</dbReference>
<dbReference type="PANTHER" id="PTHR11773">
    <property type="entry name" value="GLYCINE DEHYDROGENASE, DECARBOXYLATING"/>
    <property type="match status" value="1"/>
</dbReference>
<dbReference type="Pfam" id="PF21478">
    <property type="entry name" value="GcvP2_C"/>
    <property type="match status" value="1"/>
</dbReference>
<dbReference type="Pfam" id="PF02347">
    <property type="entry name" value="GDC-P"/>
    <property type="match status" value="2"/>
</dbReference>
<dbReference type="SUPFAM" id="SSF53383">
    <property type="entry name" value="PLP-dependent transferases"/>
    <property type="match status" value="2"/>
</dbReference>
<keyword id="KW-0560">Oxidoreductase</keyword>
<keyword id="KW-0663">Pyridoxal phosphate</keyword>
<keyword id="KW-1185">Reference proteome</keyword>
<accession>B2U0S0</accession>